<evidence type="ECO:0000255" key="1">
    <source>
        <dbReference type="HAMAP-Rule" id="MF_00815"/>
    </source>
</evidence>
<accession>A8YY71</accession>
<protein>
    <recommendedName>
        <fullName evidence="1">ATP synthase gamma chain</fullName>
    </recommendedName>
    <alternativeName>
        <fullName evidence="1">ATP synthase F1 sector gamma subunit</fullName>
    </alternativeName>
    <alternativeName>
        <fullName evidence="1">F-ATPase gamma subunit</fullName>
    </alternativeName>
</protein>
<dbReference type="EMBL" id="CP000730">
    <property type="protein sequence ID" value="ABX30091.1"/>
    <property type="molecule type" value="Genomic_DNA"/>
</dbReference>
<dbReference type="RefSeq" id="WP_000157603.1">
    <property type="nucleotide sequence ID" value="NC_010079.1"/>
</dbReference>
<dbReference type="SMR" id="A8YY71"/>
<dbReference type="GeneID" id="98346411"/>
<dbReference type="KEGG" id="sax:USA300HOU_2094"/>
<dbReference type="HOGENOM" id="CLU_050669_0_1_9"/>
<dbReference type="PHI-base" id="PHI:8019"/>
<dbReference type="GO" id="GO:0005886">
    <property type="term" value="C:plasma membrane"/>
    <property type="evidence" value="ECO:0007669"/>
    <property type="project" value="UniProtKB-SubCell"/>
</dbReference>
<dbReference type="GO" id="GO:0045259">
    <property type="term" value="C:proton-transporting ATP synthase complex"/>
    <property type="evidence" value="ECO:0007669"/>
    <property type="project" value="UniProtKB-KW"/>
</dbReference>
<dbReference type="GO" id="GO:0005524">
    <property type="term" value="F:ATP binding"/>
    <property type="evidence" value="ECO:0007669"/>
    <property type="project" value="UniProtKB-UniRule"/>
</dbReference>
<dbReference type="GO" id="GO:0046933">
    <property type="term" value="F:proton-transporting ATP synthase activity, rotational mechanism"/>
    <property type="evidence" value="ECO:0007669"/>
    <property type="project" value="UniProtKB-UniRule"/>
</dbReference>
<dbReference type="GO" id="GO:0042777">
    <property type="term" value="P:proton motive force-driven plasma membrane ATP synthesis"/>
    <property type="evidence" value="ECO:0007669"/>
    <property type="project" value="UniProtKB-UniRule"/>
</dbReference>
<dbReference type="CDD" id="cd12151">
    <property type="entry name" value="F1-ATPase_gamma"/>
    <property type="match status" value="1"/>
</dbReference>
<dbReference type="FunFam" id="1.10.287.80:FF:000019">
    <property type="entry name" value="ATP synthase gamma chain"/>
    <property type="match status" value="1"/>
</dbReference>
<dbReference type="FunFam" id="3.40.1380.10:FF:000002">
    <property type="entry name" value="ATP synthase gamma chain"/>
    <property type="match status" value="1"/>
</dbReference>
<dbReference type="Gene3D" id="3.40.1380.10">
    <property type="match status" value="1"/>
</dbReference>
<dbReference type="Gene3D" id="1.10.287.80">
    <property type="entry name" value="ATP synthase, gamma subunit, helix hairpin domain"/>
    <property type="match status" value="1"/>
</dbReference>
<dbReference type="HAMAP" id="MF_00815">
    <property type="entry name" value="ATP_synth_gamma_bact"/>
    <property type="match status" value="1"/>
</dbReference>
<dbReference type="InterPro" id="IPR035968">
    <property type="entry name" value="ATP_synth_F1_ATPase_gsu"/>
</dbReference>
<dbReference type="InterPro" id="IPR000131">
    <property type="entry name" value="ATP_synth_F1_gsu"/>
</dbReference>
<dbReference type="NCBIfam" id="TIGR01146">
    <property type="entry name" value="ATPsyn_F1gamma"/>
    <property type="match status" value="1"/>
</dbReference>
<dbReference type="PANTHER" id="PTHR11693">
    <property type="entry name" value="ATP SYNTHASE GAMMA CHAIN"/>
    <property type="match status" value="1"/>
</dbReference>
<dbReference type="PANTHER" id="PTHR11693:SF22">
    <property type="entry name" value="ATP SYNTHASE SUBUNIT GAMMA, MITOCHONDRIAL"/>
    <property type="match status" value="1"/>
</dbReference>
<dbReference type="Pfam" id="PF00231">
    <property type="entry name" value="ATP-synt"/>
    <property type="match status" value="1"/>
</dbReference>
<dbReference type="PRINTS" id="PR00126">
    <property type="entry name" value="ATPASEGAMMA"/>
</dbReference>
<dbReference type="SUPFAM" id="SSF52943">
    <property type="entry name" value="ATP synthase (F1-ATPase), gamma subunit"/>
    <property type="match status" value="1"/>
</dbReference>
<gene>
    <name evidence="1" type="primary">atpG</name>
    <name type="ordered locus">USA300HOU_2094</name>
</gene>
<keyword id="KW-0066">ATP synthesis</keyword>
<keyword id="KW-1003">Cell membrane</keyword>
<keyword id="KW-0139">CF(1)</keyword>
<keyword id="KW-0375">Hydrogen ion transport</keyword>
<keyword id="KW-0406">Ion transport</keyword>
<keyword id="KW-0472">Membrane</keyword>
<keyword id="KW-0813">Transport</keyword>
<feature type="chain" id="PRO_1000083815" description="ATP synthase gamma chain">
    <location>
        <begin position="1"/>
        <end position="288"/>
    </location>
</feature>
<sequence length="288" mass="32106">MASLKEIDTRIKSTKKMKQITKAMNMVSSSKLRRAEKNTKQFTPYMDKMQDAITAVAGASSNTNHPMLRPRKITRSGYLVITSDKGLAGAYSANVLKKLITDIEAKHQDSSEYSIVVLGQQGVDFLKNRGYDIEYSQVDVPDQPSFKSVQALANHAIDLYSEEEIDELNIYYSHYVSVLENKPTSRQVLPLSQEDSSKGHGHLSSYEFEPDKESILSVILPQYVESLIYGTILDAKASEHATRMTAMKNATDNATELIDDLSLEYNRARQAEITQQITEIVGGSAALE</sequence>
<organism>
    <name type="scientific">Staphylococcus aureus (strain USA300 / TCH1516)</name>
    <dbReference type="NCBI Taxonomy" id="451516"/>
    <lineage>
        <taxon>Bacteria</taxon>
        <taxon>Bacillati</taxon>
        <taxon>Bacillota</taxon>
        <taxon>Bacilli</taxon>
        <taxon>Bacillales</taxon>
        <taxon>Staphylococcaceae</taxon>
        <taxon>Staphylococcus</taxon>
    </lineage>
</organism>
<name>ATPG_STAAT</name>
<reference key="1">
    <citation type="journal article" date="2007" name="BMC Microbiol.">
        <title>Subtle genetic changes enhance virulence of methicillin resistant and sensitive Staphylococcus aureus.</title>
        <authorList>
            <person name="Highlander S.K."/>
            <person name="Hulten K.G."/>
            <person name="Qin X."/>
            <person name="Jiang H."/>
            <person name="Yerrapragada S."/>
            <person name="Mason E.O. Jr."/>
            <person name="Shang Y."/>
            <person name="Williams T.M."/>
            <person name="Fortunov R.M."/>
            <person name="Liu Y."/>
            <person name="Igboeli O."/>
            <person name="Petrosino J."/>
            <person name="Tirumalai M."/>
            <person name="Uzman A."/>
            <person name="Fox G.E."/>
            <person name="Cardenas A.M."/>
            <person name="Muzny D.M."/>
            <person name="Hemphill L."/>
            <person name="Ding Y."/>
            <person name="Dugan S."/>
            <person name="Blyth P.R."/>
            <person name="Buhay C.J."/>
            <person name="Dinh H.H."/>
            <person name="Hawes A.C."/>
            <person name="Holder M."/>
            <person name="Kovar C.L."/>
            <person name="Lee S.L."/>
            <person name="Liu W."/>
            <person name="Nazareth L.V."/>
            <person name="Wang Q."/>
            <person name="Zhou J."/>
            <person name="Kaplan S.L."/>
            <person name="Weinstock G.M."/>
        </authorList>
    </citation>
    <scope>NUCLEOTIDE SEQUENCE [LARGE SCALE GENOMIC DNA]</scope>
    <source>
        <strain>USA300 / TCH1516</strain>
    </source>
</reference>
<comment type="function">
    <text evidence="1">Produces ATP from ADP in the presence of a proton gradient across the membrane. The gamma chain is believed to be important in regulating ATPase activity and the flow of protons through the CF(0) complex.</text>
</comment>
<comment type="subunit">
    <text evidence="1">F-type ATPases have 2 components, CF(1) - the catalytic core - and CF(0) - the membrane proton channel. CF(1) has five subunits: alpha(3), beta(3), gamma(1), delta(1), epsilon(1). CF(0) has three main subunits: a, b and c.</text>
</comment>
<comment type="subcellular location">
    <subcellularLocation>
        <location evidence="1">Cell membrane</location>
        <topology evidence="1">Peripheral membrane protein</topology>
    </subcellularLocation>
</comment>
<comment type="similarity">
    <text evidence="1">Belongs to the ATPase gamma chain family.</text>
</comment>
<proteinExistence type="inferred from homology"/>